<evidence type="ECO:0000250" key="1"/>
<evidence type="ECO:0000305" key="2"/>
<accession>Q5NAI4</accession>
<accession>A0A0N7KDL8</accession>
<accession>B9EZ36</accession>
<sequence length="465" mass="50453">MDKSQGVLLSSNVGAGSRPWPELLGSAHWDGLLDPLDLTLRRLILLCGDLCQVTYDSFNSDSHSKYCGTCRFSRSTLLDRTQFPAAGDLSVAAYLYATSDATAFPGSMVYSMSREAWSKESNWIGYVAVSNDAAAAASGQRVIYVAWRGTIRSLEWVDVLKPDLVDHDDILPEGHPGRGRSRVMKGWYLIYSSTDERSPFSKYSARDQMLAAVRELVARYRNESLGVVCTGHSLGASLATLCAFDIVVNGVSKVGDGAHIPVTAVVFGSPQIGNPEFKKQFEEQPNLRALHVRNMPDLIPLYPSGLLGYANVGKTLQVDSKKSPYVKRDTSPGDYHNLQGILHTVAGWNGKDGEFKLQVKRSVALVNKSSGFLKDSNLVPESWWVERNKGMVLGQNGEWQLEGPAEENLPVPPVVTGKIIDDDVAAVATSSSAKEDKKTGKGSKLLSGLIDQLLCVPDTCKAGAA</sequence>
<reference key="1">
    <citation type="journal article" date="2002" name="Nature">
        <title>The genome sequence and structure of rice chromosome 1.</title>
        <authorList>
            <person name="Sasaki T."/>
            <person name="Matsumoto T."/>
            <person name="Yamamoto K."/>
            <person name="Sakata K."/>
            <person name="Baba T."/>
            <person name="Katayose Y."/>
            <person name="Wu J."/>
            <person name="Niimura Y."/>
            <person name="Cheng Z."/>
            <person name="Nagamura Y."/>
            <person name="Antonio B.A."/>
            <person name="Kanamori H."/>
            <person name="Hosokawa S."/>
            <person name="Masukawa M."/>
            <person name="Arikawa K."/>
            <person name="Chiden Y."/>
            <person name="Hayashi M."/>
            <person name="Okamoto M."/>
            <person name="Ando T."/>
            <person name="Aoki H."/>
            <person name="Arita K."/>
            <person name="Hamada M."/>
            <person name="Harada C."/>
            <person name="Hijishita S."/>
            <person name="Honda M."/>
            <person name="Ichikawa Y."/>
            <person name="Idonuma A."/>
            <person name="Iijima M."/>
            <person name="Ikeda M."/>
            <person name="Ikeno M."/>
            <person name="Ito S."/>
            <person name="Ito T."/>
            <person name="Ito Y."/>
            <person name="Ito Y."/>
            <person name="Iwabuchi A."/>
            <person name="Kamiya K."/>
            <person name="Karasawa W."/>
            <person name="Katagiri S."/>
            <person name="Kikuta A."/>
            <person name="Kobayashi N."/>
            <person name="Kono I."/>
            <person name="Machita K."/>
            <person name="Maehara T."/>
            <person name="Mizuno H."/>
            <person name="Mizubayashi T."/>
            <person name="Mukai Y."/>
            <person name="Nagasaki H."/>
            <person name="Nakashima M."/>
            <person name="Nakama Y."/>
            <person name="Nakamichi Y."/>
            <person name="Nakamura M."/>
            <person name="Namiki N."/>
            <person name="Negishi M."/>
            <person name="Ohta I."/>
            <person name="Ono N."/>
            <person name="Saji S."/>
            <person name="Sakai K."/>
            <person name="Shibata M."/>
            <person name="Shimokawa T."/>
            <person name="Shomura A."/>
            <person name="Song J."/>
            <person name="Takazaki Y."/>
            <person name="Terasawa K."/>
            <person name="Tsuji K."/>
            <person name="Waki K."/>
            <person name="Yamagata H."/>
            <person name="Yamane H."/>
            <person name="Yoshiki S."/>
            <person name="Yoshihara R."/>
            <person name="Yukawa K."/>
            <person name="Zhong H."/>
            <person name="Iwama H."/>
            <person name="Endo T."/>
            <person name="Ito H."/>
            <person name="Hahn J.H."/>
            <person name="Kim H.-I."/>
            <person name="Eun M.-Y."/>
            <person name="Yano M."/>
            <person name="Jiang J."/>
            <person name="Gojobori T."/>
        </authorList>
    </citation>
    <scope>NUCLEOTIDE SEQUENCE [LARGE SCALE GENOMIC DNA]</scope>
    <source>
        <strain>cv. Nipponbare</strain>
    </source>
</reference>
<reference key="2">
    <citation type="journal article" date="2005" name="Nature">
        <title>The map-based sequence of the rice genome.</title>
        <authorList>
            <consortium name="International rice genome sequencing project (IRGSP)"/>
        </authorList>
    </citation>
    <scope>NUCLEOTIDE SEQUENCE [LARGE SCALE GENOMIC DNA]</scope>
    <source>
        <strain>cv. Nipponbare</strain>
    </source>
</reference>
<reference key="3">
    <citation type="journal article" date="2008" name="Nucleic Acids Res.">
        <title>The rice annotation project database (RAP-DB): 2008 update.</title>
        <authorList>
            <consortium name="The rice annotation project (RAP)"/>
        </authorList>
    </citation>
    <scope>GENOME REANNOTATION</scope>
    <source>
        <strain>cv. Nipponbare</strain>
    </source>
</reference>
<reference key="4">
    <citation type="journal article" date="2013" name="Rice">
        <title>Improvement of the Oryza sativa Nipponbare reference genome using next generation sequence and optical map data.</title>
        <authorList>
            <person name="Kawahara Y."/>
            <person name="de la Bastide M."/>
            <person name="Hamilton J.P."/>
            <person name="Kanamori H."/>
            <person name="McCombie W.R."/>
            <person name="Ouyang S."/>
            <person name="Schwartz D.C."/>
            <person name="Tanaka T."/>
            <person name="Wu J."/>
            <person name="Zhou S."/>
            <person name="Childs K.L."/>
            <person name="Davidson R.M."/>
            <person name="Lin H."/>
            <person name="Quesada-Ocampo L."/>
            <person name="Vaillancourt B."/>
            <person name="Sakai H."/>
            <person name="Lee S.S."/>
            <person name="Kim J."/>
            <person name="Numa H."/>
            <person name="Itoh T."/>
            <person name="Buell C.R."/>
            <person name="Matsumoto T."/>
        </authorList>
    </citation>
    <scope>GENOME REANNOTATION</scope>
    <source>
        <strain>cv. Nipponbare</strain>
    </source>
</reference>
<reference key="5">
    <citation type="journal article" date="2005" name="PLoS Biol.">
        <title>The genomes of Oryza sativa: a history of duplications.</title>
        <authorList>
            <person name="Yu J."/>
            <person name="Wang J."/>
            <person name="Lin W."/>
            <person name="Li S."/>
            <person name="Li H."/>
            <person name="Zhou J."/>
            <person name="Ni P."/>
            <person name="Dong W."/>
            <person name="Hu S."/>
            <person name="Zeng C."/>
            <person name="Zhang J."/>
            <person name="Zhang Y."/>
            <person name="Li R."/>
            <person name="Xu Z."/>
            <person name="Li S."/>
            <person name="Li X."/>
            <person name="Zheng H."/>
            <person name="Cong L."/>
            <person name="Lin L."/>
            <person name="Yin J."/>
            <person name="Geng J."/>
            <person name="Li G."/>
            <person name="Shi J."/>
            <person name="Liu J."/>
            <person name="Lv H."/>
            <person name="Li J."/>
            <person name="Wang J."/>
            <person name="Deng Y."/>
            <person name="Ran L."/>
            <person name="Shi X."/>
            <person name="Wang X."/>
            <person name="Wu Q."/>
            <person name="Li C."/>
            <person name="Ren X."/>
            <person name="Wang J."/>
            <person name="Wang X."/>
            <person name="Li D."/>
            <person name="Liu D."/>
            <person name="Zhang X."/>
            <person name="Ji Z."/>
            <person name="Zhao W."/>
            <person name="Sun Y."/>
            <person name="Zhang Z."/>
            <person name="Bao J."/>
            <person name="Han Y."/>
            <person name="Dong L."/>
            <person name="Ji J."/>
            <person name="Chen P."/>
            <person name="Wu S."/>
            <person name="Liu J."/>
            <person name="Xiao Y."/>
            <person name="Bu D."/>
            <person name="Tan J."/>
            <person name="Yang L."/>
            <person name="Ye C."/>
            <person name="Zhang J."/>
            <person name="Xu J."/>
            <person name="Zhou Y."/>
            <person name="Yu Y."/>
            <person name="Zhang B."/>
            <person name="Zhuang S."/>
            <person name="Wei H."/>
            <person name="Liu B."/>
            <person name="Lei M."/>
            <person name="Yu H."/>
            <person name="Li Y."/>
            <person name="Xu H."/>
            <person name="Wei S."/>
            <person name="He X."/>
            <person name="Fang L."/>
            <person name="Zhang Z."/>
            <person name="Zhang Y."/>
            <person name="Huang X."/>
            <person name="Su Z."/>
            <person name="Tong W."/>
            <person name="Li J."/>
            <person name="Tong Z."/>
            <person name="Li S."/>
            <person name="Ye J."/>
            <person name="Wang L."/>
            <person name="Fang L."/>
            <person name="Lei T."/>
            <person name="Chen C.-S."/>
            <person name="Chen H.-C."/>
            <person name="Xu Z."/>
            <person name="Li H."/>
            <person name="Huang H."/>
            <person name="Zhang F."/>
            <person name="Xu H."/>
            <person name="Li N."/>
            <person name="Zhao C."/>
            <person name="Li S."/>
            <person name="Dong L."/>
            <person name="Huang Y."/>
            <person name="Li L."/>
            <person name="Xi Y."/>
            <person name="Qi Q."/>
            <person name="Li W."/>
            <person name="Zhang B."/>
            <person name="Hu W."/>
            <person name="Zhang Y."/>
            <person name="Tian X."/>
            <person name="Jiao Y."/>
            <person name="Liang X."/>
            <person name="Jin J."/>
            <person name="Gao L."/>
            <person name="Zheng W."/>
            <person name="Hao B."/>
            <person name="Liu S.-M."/>
            <person name="Wang W."/>
            <person name="Yuan L."/>
            <person name="Cao M."/>
            <person name="McDermott J."/>
            <person name="Samudrala R."/>
            <person name="Wang J."/>
            <person name="Wong G.K.-S."/>
            <person name="Yang H."/>
        </authorList>
    </citation>
    <scope>NUCLEOTIDE SEQUENCE [LARGE SCALE GENOMIC DNA]</scope>
    <source>
        <strain>cv. Nipponbare</strain>
    </source>
</reference>
<reference key="6">
    <citation type="journal article" date="2003" name="Science">
        <title>Collection, mapping, and annotation of over 28,000 cDNA clones from japonica rice.</title>
        <authorList>
            <consortium name="The rice full-length cDNA consortium"/>
        </authorList>
    </citation>
    <scope>NUCLEOTIDE SEQUENCE [LARGE SCALE MRNA]</scope>
    <source>
        <strain>cv. Nipponbare</strain>
    </source>
</reference>
<name>PLA5_ORYSJ</name>
<feature type="chain" id="PRO_0000409369" description="Phospholipase A1-II 5">
    <location>
        <begin position="1"/>
        <end position="465"/>
    </location>
</feature>
<feature type="active site" description="Acyl-ester intermediate" evidence="1">
    <location>
        <position position="233"/>
    </location>
</feature>
<feature type="active site" description="Charge relay system" evidence="1">
    <location>
        <position position="233"/>
    </location>
</feature>
<feature type="active site" description="Charge relay system" evidence="1">
    <location>
        <position position="297"/>
    </location>
</feature>
<feature type="active site" description="Charge relay system" evidence="1">
    <location>
        <position position="336"/>
    </location>
</feature>
<keyword id="KW-0963">Cytoplasm</keyword>
<keyword id="KW-0378">Hydrolase</keyword>
<keyword id="KW-0442">Lipid degradation</keyword>
<keyword id="KW-0443">Lipid metabolism</keyword>
<keyword id="KW-1185">Reference proteome</keyword>
<dbReference type="EC" id="3.1.1.-"/>
<dbReference type="EMBL" id="AP002901">
    <property type="protein sequence ID" value="BAD81525.1"/>
    <property type="molecule type" value="Genomic_DNA"/>
</dbReference>
<dbReference type="EMBL" id="AP008207">
    <property type="protein sequence ID" value="BAF05955.1"/>
    <property type="molecule type" value="Genomic_DNA"/>
</dbReference>
<dbReference type="EMBL" id="AP014957">
    <property type="protein sequence ID" value="BAS73977.1"/>
    <property type="molecule type" value="Genomic_DNA"/>
</dbReference>
<dbReference type="EMBL" id="CM000138">
    <property type="protein sequence ID" value="EEE55280.1"/>
    <property type="status" value="ALT_SEQ"/>
    <property type="molecule type" value="Genomic_DNA"/>
</dbReference>
<dbReference type="EMBL" id="AK069577">
    <property type="protein sequence ID" value="BAG91498.1"/>
    <property type="molecule type" value="mRNA"/>
</dbReference>
<dbReference type="EMBL" id="AK104373">
    <property type="protein sequence ID" value="BAG96630.1"/>
    <property type="molecule type" value="mRNA"/>
</dbReference>
<dbReference type="EMBL" id="AK106129">
    <property type="protein sequence ID" value="BAG97590.1"/>
    <property type="molecule type" value="mRNA"/>
</dbReference>
<dbReference type="RefSeq" id="XP_015622065.1">
    <property type="nucleotide sequence ID" value="XM_015766579.1"/>
</dbReference>
<dbReference type="SMR" id="Q5NAI4"/>
<dbReference type="FunCoup" id="Q5NAI4">
    <property type="interactions" value="672"/>
</dbReference>
<dbReference type="STRING" id="39947.Q5NAI4"/>
<dbReference type="ESTHER" id="orysa-Q5NAI4">
    <property type="family name" value="Plant_phospholipase"/>
</dbReference>
<dbReference type="PaxDb" id="39947-Q5NAI4"/>
<dbReference type="EnsemblPlants" id="Os01t0710700-01">
    <property type="protein sequence ID" value="Os01t0710700-01"/>
    <property type="gene ID" value="Os01g0710700"/>
</dbReference>
<dbReference type="Gramene" id="Os01t0710700-01">
    <property type="protein sequence ID" value="Os01t0710700-01"/>
    <property type="gene ID" value="Os01g0710700"/>
</dbReference>
<dbReference type="KEGG" id="dosa:Os01g0710700"/>
<dbReference type="eggNOG" id="KOG4569">
    <property type="taxonomic scope" value="Eukaryota"/>
</dbReference>
<dbReference type="HOGENOM" id="CLU_018841_0_0_1"/>
<dbReference type="InParanoid" id="Q5NAI4"/>
<dbReference type="OMA" id="GSMVYSM"/>
<dbReference type="OrthoDB" id="438440at2759"/>
<dbReference type="Proteomes" id="UP000000763">
    <property type="component" value="Chromosome 1"/>
</dbReference>
<dbReference type="Proteomes" id="UP000007752">
    <property type="component" value="Chromosome 1"/>
</dbReference>
<dbReference type="Proteomes" id="UP000059680">
    <property type="component" value="Chromosome 1"/>
</dbReference>
<dbReference type="GO" id="GO:0005737">
    <property type="term" value="C:cytoplasm"/>
    <property type="evidence" value="ECO:0000250"/>
    <property type="project" value="UniProtKB"/>
</dbReference>
<dbReference type="GO" id="GO:0008970">
    <property type="term" value="F:phospholipase A1 activity"/>
    <property type="evidence" value="ECO:0000250"/>
    <property type="project" value="UniProtKB"/>
</dbReference>
<dbReference type="GO" id="GO:0071493">
    <property type="term" value="P:cellular response to UV-B"/>
    <property type="evidence" value="ECO:0007669"/>
    <property type="project" value="EnsemblPlants"/>
</dbReference>
<dbReference type="GO" id="GO:0016042">
    <property type="term" value="P:lipid catabolic process"/>
    <property type="evidence" value="ECO:0007669"/>
    <property type="project" value="UniProtKB-KW"/>
</dbReference>
<dbReference type="GO" id="GO:0009650">
    <property type="term" value="P:UV protection"/>
    <property type="evidence" value="ECO:0007669"/>
    <property type="project" value="EnsemblPlants"/>
</dbReference>
<dbReference type="CDD" id="cd00519">
    <property type="entry name" value="Lipase_3"/>
    <property type="match status" value="1"/>
</dbReference>
<dbReference type="FunFam" id="3.40.50.1820:FF:000065">
    <property type="entry name" value="Phospholipase A1-II 3"/>
    <property type="match status" value="1"/>
</dbReference>
<dbReference type="Gene3D" id="3.40.50.1820">
    <property type="entry name" value="alpha/beta hydrolase"/>
    <property type="match status" value="1"/>
</dbReference>
<dbReference type="InterPro" id="IPR029058">
    <property type="entry name" value="AB_hydrolase_fold"/>
</dbReference>
<dbReference type="InterPro" id="IPR002921">
    <property type="entry name" value="Fungal_lipase-type"/>
</dbReference>
<dbReference type="InterPro" id="IPR033556">
    <property type="entry name" value="PLA"/>
</dbReference>
<dbReference type="PANTHER" id="PTHR31828:SF10">
    <property type="entry name" value="PHOSPHOLIPASE A1-IIDELTA"/>
    <property type="match status" value="1"/>
</dbReference>
<dbReference type="PANTHER" id="PTHR31828">
    <property type="entry name" value="PHOSPHOLIPASE A1-IIGAMMA"/>
    <property type="match status" value="1"/>
</dbReference>
<dbReference type="Pfam" id="PF01764">
    <property type="entry name" value="Lipase_3"/>
    <property type="match status" value="1"/>
</dbReference>
<dbReference type="SUPFAM" id="SSF53474">
    <property type="entry name" value="alpha/beta-Hydrolases"/>
    <property type="match status" value="1"/>
</dbReference>
<proteinExistence type="evidence at transcript level"/>
<gene>
    <name type="ordered locus">Os01g0710700</name>
    <name type="ordered locus">LOC_Os01g51360</name>
    <name type="ORF">OsJ_03214</name>
    <name type="ORF">P0456F08.24</name>
</gene>
<comment type="function">
    <text evidence="1">Acylhydrolase that catalyzes the hydrolysis of phospholipids at the sn-1 position.</text>
</comment>
<comment type="subcellular location">
    <subcellularLocation>
        <location evidence="1">Cytoplasm</location>
    </subcellularLocation>
</comment>
<comment type="similarity">
    <text evidence="2">Belongs to the AB hydrolase superfamily. Lipase family.</text>
</comment>
<comment type="sequence caution" evidence="2">
    <conflict type="erroneous gene model prediction">
        <sequence resource="EMBL-CDS" id="EEE55280"/>
    </conflict>
</comment>
<protein>
    <recommendedName>
        <fullName>Phospholipase A1-II 5</fullName>
        <ecNumber>3.1.1.-</ecNumber>
    </recommendedName>
</protein>
<organism>
    <name type="scientific">Oryza sativa subsp. japonica</name>
    <name type="common">Rice</name>
    <dbReference type="NCBI Taxonomy" id="39947"/>
    <lineage>
        <taxon>Eukaryota</taxon>
        <taxon>Viridiplantae</taxon>
        <taxon>Streptophyta</taxon>
        <taxon>Embryophyta</taxon>
        <taxon>Tracheophyta</taxon>
        <taxon>Spermatophyta</taxon>
        <taxon>Magnoliopsida</taxon>
        <taxon>Liliopsida</taxon>
        <taxon>Poales</taxon>
        <taxon>Poaceae</taxon>
        <taxon>BOP clade</taxon>
        <taxon>Oryzoideae</taxon>
        <taxon>Oryzeae</taxon>
        <taxon>Oryzinae</taxon>
        <taxon>Oryza</taxon>
        <taxon>Oryza sativa</taxon>
    </lineage>
</organism>